<feature type="chain" id="PRO_0000295589" description="Nuclear receptor 2C2-associated protein">
    <location>
        <begin position="1"/>
        <end position="136"/>
    </location>
</feature>
<protein>
    <recommendedName>
        <fullName>Nuclear receptor 2C2-associated protein</fullName>
    </recommendedName>
    <alternativeName>
        <fullName>TR4 orphan receptor-associated 16 kDa protein homolog</fullName>
    </alternativeName>
</protein>
<keyword id="KW-0539">Nucleus</keyword>
<keyword id="KW-1185">Reference proteome</keyword>
<organism>
    <name type="scientific">Xenopus tropicalis</name>
    <name type="common">Western clawed frog</name>
    <name type="synonym">Silurana tropicalis</name>
    <dbReference type="NCBI Taxonomy" id="8364"/>
    <lineage>
        <taxon>Eukaryota</taxon>
        <taxon>Metazoa</taxon>
        <taxon>Chordata</taxon>
        <taxon>Craniata</taxon>
        <taxon>Vertebrata</taxon>
        <taxon>Euteleostomi</taxon>
        <taxon>Amphibia</taxon>
        <taxon>Batrachia</taxon>
        <taxon>Anura</taxon>
        <taxon>Pipoidea</taxon>
        <taxon>Pipidae</taxon>
        <taxon>Xenopodinae</taxon>
        <taxon>Xenopus</taxon>
        <taxon>Silurana</taxon>
    </lineage>
</organism>
<sequence length="136" mass="15428">MVTSVLSSVTISRVSSVLNRDVKQFGKQFLFDGREETCWNSDQGSCQWVLMEFPQNVLVSQIHLQFQGGFSCQTCALEGCYKDGELVKIADFYPEDTNTLQKFTFAEQSVSKLRVSFLNSTDFFGRITLYHLDVLG</sequence>
<name>NR2CA_XENTR</name>
<gene>
    <name type="primary">nr2c2ap</name>
    <name type="synonym">tra16</name>
</gene>
<reference key="1">
    <citation type="submission" date="2006-12" db="EMBL/GenBank/DDBJ databases">
        <authorList>
            <consortium name="NIH - Xenopus Gene Collection (XGC) project"/>
        </authorList>
    </citation>
    <scope>NUCLEOTIDE SEQUENCE [LARGE SCALE MRNA]</scope>
    <source>
        <strain>N6</strain>
        <tissue>Oviduct</tissue>
    </source>
</reference>
<dbReference type="EMBL" id="BC129029">
    <property type="protein sequence ID" value="AAI29030.1"/>
    <property type="molecule type" value="mRNA"/>
</dbReference>
<dbReference type="RefSeq" id="NP_001016306.1">
    <property type="nucleotide sequence ID" value="NM_001016306.3"/>
</dbReference>
<dbReference type="SMR" id="A1L1F0"/>
<dbReference type="FunCoup" id="A1L1F0">
    <property type="interactions" value="832"/>
</dbReference>
<dbReference type="STRING" id="8364.ENSXETP00000028514"/>
<dbReference type="PaxDb" id="8364-ENSXETP00000056403"/>
<dbReference type="DNASU" id="549060"/>
<dbReference type="GeneID" id="549060"/>
<dbReference type="KEGG" id="xtr:549060"/>
<dbReference type="AGR" id="Xenbase:XB-GENE-973035"/>
<dbReference type="CTD" id="126382"/>
<dbReference type="Xenbase" id="XB-GENE-973035">
    <property type="gene designation" value="nr2c2ap"/>
</dbReference>
<dbReference type="eggNOG" id="ENOG502RZAY">
    <property type="taxonomic scope" value="Eukaryota"/>
</dbReference>
<dbReference type="InParanoid" id="A1L1F0"/>
<dbReference type="OMA" id="FFGRITV"/>
<dbReference type="OrthoDB" id="10052260at2759"/>
<dbReference type="Proteomes" id="UP000008143">
    <property type="component" value="Chromosome 1"/>
</dbReference>
<dbReference type="Bgee" id="ENSXETG00000037690">
    <property type="expression patterns" value="Expressed in egg cell and 15 other cell types or tissues"/>
</dbReference>
<dbReference type="GO" id="GO:0005634">
    <property type="term" value="C:nucleus"/>
    <property type="evidence" value="ECO:0007669"/>
    <property type="project" value="UniProtKB-SubCell"/>
</dbReference>
<dbReference type="FunFam" id="2.60.120.260:FF:000070">
    <property type="entry name" value="Nuclear receptor 2C2-associated protein"/>
    <property type="match status" value="1"/>
</dbReference>
<dbReference type="Gene3D" id="2.60.120.260">
    <property type="entry name" value="Galactose-binding domain-like"/>
    <property type="match status" value="1"/>
</dbReference>
<dbReference type="InterPro" id="IPR008979">
    <property type="entry name" value="Galactose-bd-like_sf"/>
</dbReference>
<dbReference type="SUPFAM" id="SSF49785">
    <property type="entry name" value="Galactose-binding domain-like"/>
    <property type="match status" value="1"/>
</dbReference>
<comment type="function">
    <text evidence="1">May act as a repressor of nr2c2-mediated transactivation by suppressing the binding between nr2c2 and its response element in target genes.</text>
</comment>
<comment type="subcellular location">
    <subcellularLocation>
        <location evidence="1">Nucleus</location>
    </subcellularLocation>
</comment>
<comment type="similarity">
    <text evidence="2">Belongs to the NR2C2AP family.</text>
</comment>
<accession>A1L1F0</accession>
<evidence type="ECO:0000250" key="1"/>
<evidence type="ECO:0000305" key="2"/>
<proteinExistence type="evidence at transcript level"/>